<gene>
    <name type="primary">Mettl24</name>
</gene>
<feature type="signal peptide" evidence="1">
    <location>
        <begin position="1"/>
        <end position="38"/>
    </location>
</feature>
<feature type="chain" id="PRO_0000343745" description="Probable methyltransferase-like protein 24">
    <location>
        <begin position="39"/>
        <end position="363"/>
    </location>
</feature>
<feature type="region of interest" description="Disordered" evidence="2">
    <location>
        <begin position="37"/>
        <end position="62"/>
    </location>
</feature>
<proteinExistence type="evidence at transcript level"/>
<comment type="function">
    <text evidence="3">Probable methyltransferase.</text>
</comment>
<comment type="subcellular location">
    <subcellularLocation>
        <location evidence="3">Secreted</location>
    </subcellularLocation>
</comment>
<comment type="similarity">
    <text evidence="3">Belongs to the methyltransferase superfamily.</text>
</comment>
<evidence type="ECO:0000255" key="1"/>
<evidence type="ECO:0000256" key="2">
    <source>
        <dbReference type="SAM" id="MobiDB-lite"/>
    </source>
</evidence>
<evidence type="ECO:0000305" key="3"/>
<keyword id="KW-0489">Methyltransferase</keyword>
<keyword id="KW-1185">Reference proteome</keyword>
<keyword id="KW-0964">Secreted</keyword>
<keyword id="KW-0732">Signal</keyword>
<keyword id="KW-0808">Transferase</keyword>
<reference key="1">
    <citation type="journal article" date="2004" name="Genome Res.">
        <title>The status, quality, and expansion of the NIH full-length cDNA project: the Mammalian Gene Collection (MGC).</title>
        <authorList>
            <consortium name="The MGC Project Team"/>
        </authorList>
    </citation>
    <scope>NUCLEOTIDE SEQUENCE [LARGE SCALE MRNA]</scope>
    <source>
        <tissue>Spleen</tissue>
    </source>
</reference>
<organism>
    <name type="scientific">Rattus norvegicus</name>
    <name type="common">Rat</name>
    <dbReference type="NCBI Taxonomy" id="10116"/>
    <lineage>
        <taxon>Eukaryota</taxon>
        <taxon>Metazoa</taxon>
        <taxon>Chordata</taxon>
        <taxon>Craniata</taxon>
        <taxon>Vertebrata</taxon>
        <taxon>Euteleostomi</taxon>
        <taxon>Mammalia</taxon>
        <taxon>Eutheria</taxon>
        <taxon>Euarchontoglires</taxon>
        <taxon>Glires</taxon>
        <taxon>Rodentia</taxon>
        <taxon>Myomorpha</taxon>
        <taxon>Muroidea</taxon>
        <taxon>Muridae</taxon>
        <taxon>Murinae</taxon>
        <taxon>Rattus</taxon>
    </lineage>
</organism>
<accession>Q5BK01</accession>
<sequence length="363" mass="40967">MGTAKPPGRGCGALPRWLLGAALLLGLRLCMELRHAGSGPPGRRDLRGPPRTHLLPAPGPLRGTRRRQVTYVRSGRRALPRGGVSTTPPEPSCCAQLGLPSRKGPRWHIELQPWAGPSRSLDEEASRFLNYIGTTQIACDRMGTNSVATDSGPALKPWLVCLDDRFGLAHQIRTKQCRLYSLGLGSDDTHFEVSMANGGCEVHRFDPSVRSAHVLQSQRLWHHRLSIDWRDPHPAVAAQKPYSNTRKLGSILNEFGHHKIDVLKADLESAEWKVLENLILEDVLEQIGQLIFEIHLHWPGFEVSGSESSVVRFWYSLLKELERKDFRLFHTYKDLSKPQLFLKKDIFNASSCYTLSWVNTRWR</sequence>
<dbReference type="EC" id="2.1.1.-"/>
<dbReference type="EMBL" id="BC091261">
    <property type="protein sequence ID" value="AAH91261.1"/>
    <property type="molecule type" value="mRNA"/>
</dbReference>
<dbReference type="RefSeq" id="NP_001020209.1">
    <property type="nucleotide sequence ID" value="NM_001025038.1"/>
</dbReference>
<dbReference type="FunCoup" id="Q5BK01">
    <property type="interactions" value="8"/>
</dbReference>
<dbReference type="PhosphoSitePlus" id="Q5BK01"/>
<dbReference type="PaxDb" id="10116-ENSRNOP00000038872"/>
<dbReference type="Ensembl" id="ENSRNOT00000036766.6">
    <property type="protein sequence ID" value="ENSRNOP00000038872.3"/>
    <property type="gene ID" value="ENSRNOG00000024221.6"/>
</dbReference>
<dbReference type="GeneID" id="499465"/>
<dbReference type="KEGG" id="rno:499465"/>
<dbReference type="UCSC" id="RGD:1564857">
    <property type="organism name" value="rat"/>
</dbReference>
<dbReference type="AGR" id="RGD:1564857"/>
<dbReference type="CTD" id="728464"/>
<dbReference type="RGD" id="1564857">
    <property type="gene designation" value="Mettl24"/>
</dbReference>
<dbReference type="eggNOG" id="ENOG502QRD5">
    <property type="taxonomic scope" value="Eukaryota"/>
</dbReference>
<dbReference type="GeneTree" id="ENSGT00390000002881"/>
<dbReference type="HOGENOM" id="CLU_061403_0_0_1"/>
<dbReference type="InParanoid" id="Q5BK01"/>
<dbReference type="OMA" id="TQIACDH"/>
<dbReference type="OrthoDB" id="75999at9989"/>
<dbReference type="PhylomeDB" id="Q5BK01"/>
<dbReference type="TreeFam" id="TF330614"/>
<dbReference type="PRO" id="PR:Q5BK01"/>
<dbReference type="Proteomes" id="UP000002494">
    <property type="component" value="Chromosome 20"/>
</dbReference>
<dbReference type="Bgee" id="ENSRNOG00000024221">
    <property type="expression patterns" value="Expressed in lung and 18 other cell types or tissues"/>
</dbReference>
<dbReference type="GO" id="GO:0005576">
    <property type="term" value="C:extracellular region"/>
    <property type="evidence" value="ECO:0007669"/>
    <property type="project" value="UniProtKB-SubCell"/>
</dbReference>
<dbReference type="GO" id="GO:0008168">
    <property type="term" value="F:methyltransferase activity"/>
    <property type="evidence" value="ECO:0007669"/>
    <property type="project" value="UniProtKB-KW"/>
</dbReference>
<dbReference type="GO" id="GO:0032259">
    <property type="term" value="P:methylation"/>
    <property type="evidence" value="ECO:0007669"/>
    <property type="project" value="UniProtKB-KW"/>
</dbReference>
<dbReference type="InterPro" id="IPR025714">
    <property type="entry name" value="Methyltranfer_dom"/>
</dbReference>
<dbReference type="InterPro" id="IPR026913">
    <property type="entry name" value="METTL24"/>
</dbReference>
<dbReference type="PANTHER" id="PTHR32026">
    <property type="entry name" value="METHYLTRANSFERASE-LIKE PROTEIN 24"/>
    <property type="match status" value="1"/>
</dbReference>
<dbReference type="PANTHER" id="PTHR32026:SF10">
    <property type="entry name" value="METHYLTRANSFERASE-LIKE PROTEIN 24-RELATED"/>
    <property type="match status" value="1"/>
</dbReference>
<dbReference type="Pfam" id="PF13383">
    <property type="entry name" value="Methyltransf_22"/>
    <property type="match status" value="1"/>
</dbReference>
<name>MET24_RAT</name>
<protein>
    <recommendedName>
        <fullName evidence="3">Probable methyltransferase-like protein 24</fullName>
        <ecNumber>2.1.1.-</ecNumber>
    </recommendedName>
</protein>